<proteinExistence type="inferred from homology"/>
<organism>
    <name type="scientific">Lactobacillus delbrueckii subsp. bulgaricus (strain ATCC BAA-365 / Lb-18)</name>
    <dbReference type="NCBI Taxonomy" id="321956"/>
    <lineage>
        <taxon>Bacteria</taxon>
        <taxon>Bacillati</taxon>
        <taxon>Bacillota</taxon>
        <taxon>Bacilli</taxon>
        <taxon>Lactobacillales</taxon>
        <taxon>Lactobacillaceae</taxon>
        <taxon>Lactobacillus</taxon>
    </lineage>
</organism>
<sequence length="85" mass="9881">MSSLDKTMHFDFNQNKGKNIRDTLEDVYKALEEKGYSPINQIVGYLLSGDPAYIPRHNDARNLILKHERDEIIEELVKSYLGKDK</sequence>
<dbReference type="EMBL" id="CP000412">
    <property type="protein sequence ID" value="ABJ58978.1"/>
    <property type="molecule type" value="Genomic_DNA"/>
</dbReference>
<dbReference type="RefSeq" id="WP_002876574.1">
    <property type="nucleotide sequence ID" value="NC_008529.1"/>
</dbReference>
<dbReference type="SMR" id="Q048Z4"/>
<dbReference type="GeneID" id="69669391"/>
<dbReference type="KEGG" id="lbu:LBUL_1485"/>
<dbReference type="HOGENOM" id="CLU_162466_0_0_9"/>
<dbReference type="BioCyc" id="LDEL321956:LBUL_RS07015-MONOMER"/>
<dbReference type="HAMAP" id="MF_01507">
    <property type="entry name" value="UPF0297"/>
    <property type="match status" value="1"/>
</dbReference>
<dbReference type="InterPro" id="IPR009309">
    <property type="entry name" value="IreB"/>
</dbReference>
<dbReference type="NCBIfam" id="NF003997">
    <property type="entry name" value="PRK05473.1"/>
    <property type="match status" value="1"/>
</dbReference>
<dbReference type="PANTHER" id="PTHR40067">
    <property type="entry name" value="UPF0297 PROTEIN YRZL"/>
    <property type="match status" value="1"/>
</dbReference>
<dbReference type="PANTHER" id="PTHR40067:SF1">
    <property type="entry name" value="UPF0297 PROTEIN YRZL"/>
    <property type="match status" value="1"/>
</dbReference>
<dbReference type="Pfam" id="PF06135">
    <property type="entry name" value="IreB"/>
    <property type="match status" value="1"/>
</dbReference>
<dbReference type="PIRSF" id="PIRSF037258">
    <property type="entry name" value="DUF965_bac"/>
    <property type="match status" value="1"/>
</dbReference>
<protein>
    <recommendedName>
        <fullName evidence="1">UPF0297 protein LBUL_1485</fullName>
    </recommendedName>
</protein>
<reference key="1">
    <citation type="journal article" date="2006" name="Proc. Natl. Acad. Sci. U.S.A.">
        <title>Comparative genomics of the lactic acid bacteria.</title>
        <authorList>
            <person name="Makarova K.S."/>
            <person name="Slesarev A."/>
            <person name="Wolf Y.I."/>
            <person name="Sorokin A."/>
            <person name="Mirkin B."/>
            <person name="Koonin E.V."/>
            <person name="Pavlov A."/>
            <person name="Pavlova N."/>
            <person name="Karamychev V."/>
            <person name="Polouchine N."/>
            <person name="Shakhova V."/>
            <person name="Grigoriev I."/>
            <person name="Lou Y."/>
            <person name="Rohksar D."/>
            <person name="Lucas S."/>
            <person name="Huang K."/>
            <person name="Goodstein D.M."/>
            <person name="Hawkins T."/>
            <person name="Plengvidhya V."/>
            <person name="Welker D."/>
            <person name="Hughes J."/>
            <person name="Goh Y."/>
            <person name="Benson A."/>
            <person name="Baldwin K."/>
            <person name="Lee J.-H."/>
            <person name="Diaz-Muniz I."/>
            <person name="Dosti B."/>
            <person name="Smeianov V."/>
            <person name="Wechter W."/>
            <person name="Barabote R."/>
            <person name="Lorca G."/>
            <person name="Altermann E."/>
            <person name="Barrangou R."/>
            <person name="Ganesan B."/>
            <person name="Xie Y."/>
            <person name="Rawsthorne H."/>
            <person name="Tamir D."/>
            <person name="Parker C."/>
            <person name="Breidt F."/>
            <person name="Broadbent J.R."/>
            <person name="Hutkins R."/>
            <person name="O'Sullivan D."/>
            <person name="Steele J."/>
            <person name="Unlu G."/>
            <person name="Saier M.H. Jr."/>
            <person name="Klaenhammer T."/>
            <person name="Richardson P."/>
            <person name="Kozyavkin S."/>
            <person name="Weimer B.C."/>
            <person name="Mills D.A."/>
        </authorList>
    </citation>
    <scope>NUCLEOTIDE SEQUENCE [LARGE SCALE GENOMIC DNA]</scope>
    <source>
        <strain>ATCC BAA-365 / Lb-18</strain>
    </source>
</reference>
<accession>Q048Z4</accession>
<evidence type="ECO:0000255" key="1">
    <source>
        <dbReference type="HAMAP-Rule" id="MF_01507"/>
    </source>
</evidence>
<gene>
    <name type="ordered locus">LBUL_1485</name>
</gene>
<comment type="similarity">
    <text evidence="1">Belongs to the UPF0297 family.</text>
</comment>
<feature type="chain" id="PRO_0000289303" description="UPF0297 protein LBUL_1485">
    <location>
        <begin position="1"/>
        <end position="85"/>
    </location>
</feature>
<name>Y1485_LACDB</name>